<evidence type="ECO:0000255" key="1">
    <source>
        <dbReference type="HAMAP-Rule" id="MF_01106"/>
    </source>
</evidence>
<sequence length="413" mass="43244">MSASVSPLAPKHYPAMPVIHGVRIATAAAGIKYKGRTDLMLMVFDRPAEAAGVFTRSLCPSAPVDFCRRNLVHGKARAVVVNSGNANAFTGLKGREATQATAEAAAKAIGCATTDIFLASTGVIGEPLDAGKFSHLLGDMAESATEDFWTEAAKAIMTTDTYPKVATETVLLGQVPVTINGIAKGAGMIAPDMATMLSFVVTDAPIKADALQSLLSKGVGSTFNSVTVDSDTSTSDTLMLFATGTAAERGAPEITDAADKRLADFKKALGRVLKSLALQVVRDGEGARKMVEVEVTGAKSAASAKKIALSIANSPLVKTAVAGEDANWGRVVMAVGKAGEPADRDRLAIWFGDIRVAHQGERDPAYSEDATSAYMEGEDIRIRVDLGIGRGKATVWTCDLTKEYVAINGDYRS</sequence>
<gene>
    <name evidence="1" type="primary">argJ</name>
    <name type="ordered locus">BR1941</name>
    <name type="ordered locus">BS1330_I1935</name>
</gene>
<accession>Q8FYE2</accession>
<accession>G0K884</accession>
<organism>
    <name type="scientific">Brucella suis biovar 1 (strain 1330)</name>
    <dbReference type="NCBI Taxonomy" id="204722"/>
    <lineage>
        <taxon>Bacteria</taxon>
        <taxon>Pseudomonadati</taxon>
        <taxon>Pseudomonadota</taxon>
        <taxon>Alphaproteobacteria</taxon>
        <taxon>Hyphomicrobiales</taxon>
        <taxon>Brucellaceae</taxon>
        <taxon>Brucella/Ochrobactrum group</taxon>
        <taxon>Brucella</taxon>
    </lineage>
</organism>
<protein>
    <recommendedName>
        <fullName evidence="1">Arginine biosynthesis bifunctional protein ArgJ</fullName>
    </recommendedName>
    <domain>
        <recommendedName>
            <fullName evidence="1">Glutamate N-acetyltransferase</fullName>
            <ecNumber evidence="1">2.3.1.35</ecNumber>
        </recommendedName>
        <alternativeName>
            <fullName evidence="1">Ornithine acetyltransferase</fullName>
            <shortName evidence="1">OATase</shortName>
        </alternativeName>
        <alternativeName>
            <fullName evidence="1">Ornithine transacetylase</fullName>
        </alternativeName>
    </domain>
    <domain>
        <recommendedName>
            <fullName evidence="1">Amino-acid acetyltransferase</fullName>
            <ecNumber evidence="1">2.3.1.1</ecNumber>
        </recommendedName>
        <alternativeName>
            <fullName evidence="1">N-acetylglutamate synthase</fullName>
            <shortName evidence="1">AGSase</shortName>
        </alternativeName>
    </domain>
    <component>
        <recommendedName>
            <fullName evidence="1">Arginine biosynthesis bifunctional protein ArgJ alpha chain</fullName>
        </recommendedName>
    </component>
    <component>
        <recommendedName>
            <fullName evidence="1">Arginine biosynthesis bifunctional protein ArgJ beta chain</fullName>
        </recommendedName>
    </component>
</protein>
<keyword id="KW-0012">Acyltransferase</keyword>
<keyword id="KW-0028">Amino-acid biosynthesis</keyword>
<keyword id="KW-0055">Arginine biosynthesis</keyword>
<keyword id="KW-0068">Autocatalytic cleavage</keyword>
<keyword id="KW-0963">Cytoplasm</keyword>
<keyword id="KW-0511">Multifunctional enzyme</keyword>
<keyword id="KW-0808">Transferase</keyword>
<name>ARGJ_BRUSU</name>
<proteinExistence type="inferred from homology"/>
<feature type="chain" id="PRO_0000002139" description="Arginine biosynthesis bifunctional protein ArgJ alpha chain" evidence="1">
    <location>
        <begin position="1"/>
        <end position="194"/>
    </location>
</feature>
<feature type="chain" id="PRO_0000002140" description="Arginine biosynthesis bifunctional protein ArgJ beta chain" evidence="1">
    <location>
        <begin position="195"/>
        <end position="413"/>
    </location>
</feature>
<feature type="active site" description="Nucleophile" evidence="1">
    <location>
        <position position="195"/>
    </location>
</feature>
<feature type="binding site" evidence="1">
    <location>
        <position position="158"/>
    </location>
    <ligand>
        <name>substrate</name>
    </ligand>
</feature>
<feature type="binding site" evidence="1">
    <location>
        <position position="184"/>
    </location>
    <ligand>
        <name>substrate</name>
    </ligand>
</feature>
<feature type="binding site" evidence="1">
    <location>
        <position position="195"/>
    </location>
    <ligand>
        <name>substrate</name>
    </ligand>
</feature>
<feature type="binding site" evidence="1">
    <location>
        <position position="285"/>
    </location>
    <ligand>
        <name>substrate</name>
    </ligand>
</feature>
<feature type="binding site" evidence="1">
    <location>
        <position position="408"/>
    </location>
    <ligand>
        <name>substrate</name>
    </ligand>
</feature>
<feature type="binding site" evidence="1">
    <location>
        <position position="413"/>
    </location>
    <ligand>
        <name>substrate</name>
    </ligand>
</feature>
<feature type="site" description="Involved in the stabilization of negative charge on the oxyanion by the formation of the oxyanion hole" evidence="1">
    <location>
        <position position="121"/>
    </location>
</feature>
<feature type="site" description="Involved in the stabilization of negative charge on the oxyanion by the formation of the oxyanion hole" evidence="1">
    <location>
        <position position="122"/>
    </location>
</feature>
<feature type="site" description="Cleavage; by autolysis" evidence="1">
    <location>
        <begin position="194"/>
        <end position="195"/>
    </location>
</feature>
<dbReference type="EC" id="2.3.1.35" evidence="1"/>
<dbReference type="EC" id="2.3.1.1" evidence="1"/>
<dbReference type="EMBL" id="AE014291">
    <property type="protein sequence ID" value="AAN30833.1"/>
    <property type="molecule type" value="Genomic_DNA"/>
</dbReference>
<dbReference type="EMBL" id="CP002997">
    <property type="protein sequence ID" value="AEM19250.1"/>
    <property type="molecule type" value="Genomic_DNA"/>
</dbReference>
<dbReference type="RefSeq" id="WP_002965009.1">
    <property type="nucleotide sequence ID" value="NZ_KN046804.1"/>
</dbReference>
<dbReference type="SMR" id="Q8FYE2"/>
<dbReference type="MEROPS" id="T05.001"/>
<dbReference type="GeneID" id="97534775"/>
<dbReference type="KEGG" id="bms:BR1941"/>
<dbReference type="KEGG" id="bsi:BS1330_I1935"/>
<dbReference type="PATRIC" id="fig|204722.22.peg.2073"/>
<dbReference type="HOGENOM" id="CLU_027172_1_0_5"/>
<dbReference type="UniPathway" id="UPA00068">
    <property type="reaction ID" value="UER00106"/>
</dbReference>
<dbReference type="UniPathway" id="UPA00068">
    <property type="reaction ID" value="UER00111"/>
</dbReference>
<dbReference type="Proteomes" id="UP000007104">
    <property type="component" value="Chromosome I"/>
</dbReference>
<dbReference type="GO" id="GO:0005737">
    <property type="term" value="C:cytoplasm"/>
    <property type="evidence" value="ECO:0007669"/>
    <property type="project" value="UniProtKB-SubCell"/>
</dbReference>
<dbReference type="GO" id="GO:0004358">
    <property type="term" value="F:glutamate N-acetyltransferase activity"/>
    <property type="evidence" value="ECO:0007669"/>
    <property type="project" value="UniProtKB-UniRule"/>
</dbReference>
<dbReference type="GO" id="GO:0004042">
    <property type="term" value="F:L-glutamate N-acetyltransferase activity"/>
    <property type="evidence" value="ECO:0007669"/>
    <property type="project" value="UniProtKB-UniRule"/>
</dbReference>
<dbReference type="GO" id="GO:0006526">
    <property type="term" value="P:L-arginine biosynthetic process"/>
    <property type="evidence" value="ECO:0007669"/>
    <property type="project" value="UniProtKB-UniRule"/>
</dbReference>
<dbReference type="GO" id="GO:0006592">
    <property type="term" value="P:ornithine biosynthetic process"/>
    <property type="evidence" value="ECO:0007669"/>
    <property type="project" value="TreeGrafter"/>
</dbReference>
<dbReference type="CDD" id="cd02152">
    <property type="entry name" value="OAT"/>
    <property type="match status" value="1"/>
</dbReference>
<dbReference type="FunFam" id="3.10.20.340:FF:000001">
    <property type="entry name" value="Arginine biosynthesis bifunctional protein ArgJ, chloroplastic"/>
    <property type="match status" value="1"/>
</dbReference>
<dbReference type="FunFam" id="3.60.70.12:FF:000001">
    <property type="entry name" value="Arginine biosynthesis bifunctional protein ArgJ, chloroplastic"/>
    <property type="match status" value="1"/>
</dbReference>
<dbReference type="Gene3D" id="3.10.20.340">
    <property type="entry name" value="ArgJ beta chain, C-terminal domain"/>
    <property type="match status" value="1"/>
</dbReference>
<dbReference type="Gene3D" id="3.60.70.12">
    <property type="entry name" value="L-amino peptidase D-ALA esterase/amidase"/>
    <property type="match status" value="1"/>
</dbReference>
<dbReference type="HAMAP" id="MF_01106">
    <property type="entry name" value="ArgJ"/>
    <property type="match status" value="1"/>
</dbReference>
<dbReference type="InterPro" id="IPR002813">
    <property type="entry name" value="Arg_biosynth_ArgJ"/>
</dbReference>
<dbReference type="InterPro" id="IPR016117">
    <property type="entry name" value="ArgJ-like_dom_sf"/>
</dbReference>
<dbReference type="InterPro" id="IPR042195">
    <property type="entry name" value="ArgJ_beta_C"/>
</dbReference>
<dbReference type="NCBIfam" id="TIGR00120">
    <property type="entry name" value="ArgJ"/>
    <property type="match status" value="1"/>
</dbReference>
<dbReference type="NCBIfam" id="NF003802">
    <property type="entry name" value="PRK05388.1"/>
    <property type="match status" value="1"/>
</dbReference>
<dbReference type="PANTHER" id="PTHR23100">
    <property type="entry name" value="ARGININE BIOSYNTHESIS BIFUNCTIONAL PROTEIN ARGJ"/>
    <property type="match status" value="1"/>
</dbReference>
<dbReference type="PANTHER" id="PTHR23100:SF0">
    <property type="entry name" value="ARGININE BIOSYNTHESIS BIFUNCTIONAL PROTEIN ARGJ, MITOCHONDRIAL"/>
    <property type="match status" value="1"/>
</dbReference>
<dbReference type="Pfam" id="PF01960">
    <property type="entry name" value="ArgJ"/>
    <property type="match status" value="1"/>
</dbReference>
<dbReference type="SUPFAM" id="SSF56266">
    <property type="entry name" value="DmpA/ArgJ-like"/>
    <property type="match status" value="1"/>
</dbReference>
<comment type="function">
    <text evidence="1">Catalyzes two activities which are involved in the cyclic version of arginine biosynthesis: the synthesis of N-acetylglutamate from glutamate and acetyl-CoA as the acetyl donor, and of ornithine by transacetylation between N(2)-acetylornithine and glutamate.</text>
</comment>
<comment type="catalytic activity">
    <reaction evidence="1">
        <text>N(2)-acetyl-L-ornithine + L-glutamate = N-acetyl-L-glutamate + L-ornithine</text>
        <dbReference type="Rhea" id="RHEA:15349"/>
        <dbReference type="ChEBI" id="CHEBI:29985"/>
        <dbReference type="ChEBI" id="CHEBI:44337"/>
        <dbReference type="ChEBI" id="CHEBI:46911"/>
        <dbReference type="ChEBI" id="CHEBI:57805"/>
        <dbReference type="EC" id="2.3.1.35"/>
    </reaction>
</comment>
<comment type="catalytic activity">
    <reaction evidence="1">
        <text>L-glutamate + acetyl-CoA = N-acetyl-L-glutamate + CoA + H(+)</text>
        <dbReference type="Rhea" id="RHEA:24292"/>
        <dbReference type="ChEBI" id="CHEBI:15378"/>
        <dbReference type="ChEBI" id="CHEBI:29985"/>
        <dbReference type="ChEBI" id="CHEBI:44337"/>
        <dbReference type="ChEBI" id="CHEBI:57287"/>
        <dbReference type="ChEBI" id="CHEBI:57288"/>
        <dbReference type="EC" id="2.3.1.1"/>
    </reaction>
</comment>
<comment type="pathway">
    <text evidence="1">Amino-acid biosynthesis; L-arginine biosynthesis; L-ornithine and N-acetyl-L-glutamate from L-glutamate and N(2)-acetyl-L-ornithine (cyclic): step 1/1.</text>
</comment>
<comment type="pathway">
    <text evidence="1">Amino-acid biosynthesis; L-arginine biosynthesis; N(2)-acetyl-L-ornithine from L-glutamate: step 1/4.</text>
</comment>
<comment type="subunit">
    <text evidence="1">Heterotetramer of two alpha and two beta chains.</text>
</comment>
<comment type="subcellular location">
    <subcellularLocation>
        <location evidence="1">Cytoplasm</location>
    </subcellularLocation>
</comment>
<comment type="similarity">
    <text evidence="1">Belongs to the ArgJ family.</text>
</comment>
<reference key="1">
    <citation type="journal article" date="2002" name="Proc. Natl. Acad. Sci. U.S.A.">
        <title>The Brucella suis genome reveals fundamental similarities between animal and plant pathogens and symbionts.</title>
        <authorList>
            <person name="Paulsen I.T."/>
            <person name="Seshadri R."/>
            <person name="Nelson K.E."/>
            <person name="Eisen J.A."/>
            <person name="Heidelberg J.F."/>
            <person name="Read T.D."/>
            <person name="Dodson R.J."/>
            <person name="Umayam L.A."/>
            <person name="Brinkac L.M."/>
            <person name="Beanan M.J."/>
            <person name="Daugherty S.C."/>
            <person name="DeBoy R.T."/>
            <person name="Durkin A.S."/>
            <person name="Kolonay J.F."/>
            <person name="Madupu R."/>
            <person name="Nelson W.C."/>
            <person name="Ayodeji B."/>
            <person name="Kraul M."/>
            <person name="Shetty J."/>
            <person name="Malek J.A."/>
            <person name="Van Aken S.E."/>
            <person name="Riedmuller S."/>
            <person name="Tettelin H."/>
            <person name="Gill S.R."/>
            <person name="White O."/>
            <person name="Salzberg S.L."/>
            <person name="Hoover D.L."/>
            <person name="Lindler L.E."/>
            <person name="Halling S.M."/>
            <person name="Boyle S.M."/>
            <person name="Fraser C.M."/>
        </authorList>
    </citation>
    <scope>NUCLEOTIDE SEQUENCE [LARGE SCALE GENOMIC DNA]</scope>
    <source>
        <strain>1330</strain>
    </source>
</reference>
<reference key="2">
    <citation type="journal article" date="2011" name="J. Bacteriol.">
        <title>Revised genome sequence of Brucella suis 1330.</title>
        <authorList>
            <person name="Tae H."/>
            <person name="Shallom S."/>
            <person name="Settlage R."/>
            <person name="Preston D."/>
            <person name="Adams L.G."/>
            <person name="Garner H.R."/>
        </authorList>
    </citation>
    <scope>NUCLEOTIDE SEQUENCE [LARGE SCALE GENOMIC DNA]</scope>
    <source>
        <strain>1330</strain>
    </source>
</reference>